<gene>
    <name evidence="1" type="primary">ligA</name>
    <name type="ordered locus">SPP_1122</name>
</gene>
<keyword id="KW-0002">3D-structure</keyword>
<keyword id="KW-0227">DNA damage</keyword>
<keyword id="KW-0234">DNA repair</keyword>
<keyword id="KW-0235">DNA replication</keyword>
<keyword id="KW-0436">Ligase</keyword>
<keyword id="KW-0460">Magnesium</keyword>
<keyword id="KW-0464">Manganese</keyword>
<keyword id="KW-0479">Metal-binding</keyword>
<keyword id="KW-0520">NAD</keyword>
<keyword id="KW-0862">Zinc</keyword>
<evidence type="ECO:0000255" key="1">
    <source>
        <dbReference type="HAMAP-Rule" id="MF_01588"/>
    </source>
</evidence>
<evidence type="ECO:0007829" key="2">
    <source>
        <dbReference type="PDB" id="4GLW"/>
    </source>
</evidence>
<proteinExistence type="evidence at protein level"/>
<feature type="chain" id="PRO_0000380487" description="DNA ligase">
    <location>
        <begin position="1"/>
        <end position="652"/>
    </location>
</feature>
<feature type="domain" description="BRCT" evidence="1">
    <location>
        <begin position="577"/>
        <end position="652"/>
    </location>
</feature>
<feature type="active site" description="N6-AMP-lysine intermediate" evidence="1">
    <location>
        <position position="109"/>
    </location>
</feature>
<feature type="binding site" evidence="1">
    <location>
        <begin position="29"/>
        <end position="33"/>
    </location>
    <ligand>
        <name>NAD(+)</name>
        <dbReference type="ChEBI" id="CHEBI:57540"/>
    </ligand>
</feature>
<feature type="binding site" evidence="1">
    <location>
        <begin position="78"/>
        <end position="79"/>
    </location>
    <ligand>
        <name>NAD(+)</name>
        <dbReference type="ChEBI" id="CHEBI:57540"/>
    </ligand>
</feature>
<feature type="binding site" evidence="1">
    <location>
        <position position="107"/>
    </location>
    <ligand>
        <name>NAD(+)</name>
        <dbReference type="ChEBI" id="CHEBI:57540"/>
    </ligand>
</feature>
<feature type="binding site" evidence="1">
    <location>
        <position position="130"/>
    </location>
    <ligand>
        <name>NAD(+)</name>
        <dbReference type="ChEBI" id="CHEBI:57540"/>
    </ligand>
</feature>
<feature type="binding site" evidence="1">
    <location>
        <position position="164"/>
    </location>
    <ligand>
        <name>NAD(+)</name>
        <dbReference type="ChEBI" id="CHEBI:57540"/>
    </ligand>
</feature>
<feature type="binding site" evidence="1">
    <location>
        <position position="278"/>
    </location>
    <ligand>
        <name>NAD(+)</name>
        <dbReference type="ChEBI" id="CHEBI:57540"/>
    </ligand>
</feature>
<feature type="binding site" evidence="1">
    <location>
        <position position="302"/>
    </location>
    <ligand>
        <name>NAD(+)</name>
        <dbReference type="ChEBI" id="CHEBI:57540"/>
    </ligand>
</feature>
<feature type="binding site" evidence="1">
    <location>
        <position position="395"/>
    </location>
    <ligand>
        <name>Zn(2+)</name>
        <dbReference type="ChEBI" id="CHEBI:29105"/>
    </ligand>
</feature>
<feature type="binding site" evidence="1">
    <location>
        <position position="398"/>
    </location>
    <ligand>
        <name>Zn(2+)</name>
        <dbReference type="ChEBI" id="CHEBI:29105"/>
    </ligand>
</feature>
<feature type="binding site" evidence="1">
    <location>
        <position position="413"/>
    </location>
    <ligand>
        <name>Zn(2+)</name>
        <dbReference type="ChEBI" id="CHEBI:29105"/>
    </ligand>
</feature>
<feature type="binding site" evidence="1">
    <location>
        <position position="418"/>
    </location>
    <ligand>
        <name>Zn(2+)</name>
        <dbReference type="ChEBI" id="CHEBI:29105"/>
    </ligand>
</feature>
<feature type="helix" evidence="2">
    <location>
        <begin position="3"/>
        <end position="6"/>
    </location>
</feature>
<feature type="helix" evidence="2">
    <location>
        <begin position="8"/>
        <end position="12"/>
    </location>
</feature>
<feature type="helix" evidence="2">
    <location>
        <begin position="38"/>
        <end position="45"/>
    </location>
</feature>
<feature type="helix" evidence="2">
    <location>
        <begin position="47"/>
        <end position="49"/>
    </location>
</feature>
<feature type="helix" evidence="2">
    <location>
        <begin position="55"/>
        <end position="58"/>
    </location>
</feature>
<feature type="strand" evidence="2">
    <location>
        <begin position="68"/>
        <end position="71"/>
    </location>
</feature>
<feature type="helix" evidence="2">
    <location>
        <begin position="85"/>
        <end position="95"/>
    </location>
</feature>
<feature type="turn" evidence="2">
    <location>
        <begin position="96"/>
        <end position="98"/>
    </location>
</feature>
<feature type="strand" evidence="2">
    <location>
        <begin position="104"/>
        <end position="110"/>
    </location>
</feature>
<feature type="strand" evidence="2">
    <location>
        <begin position="112"/>
        <end position="120"/>
    </location>
</feature>
<feature type="strand" evidence="2">
    <location>
        <begin position="123"/>
        <end position="129"/>
    </location>
</feature>
<feature type="strand" evidence="2">
    <location>
        <begin position="133"/>
        <end position="138"/>
    </location>
</feature>
<feature type="helix" evidence="2">
    <location>
        <begin position="140"/>
        <end position="143"/>
    </location>
</feature>
<feature type="strand" evidence="2">
    <location>
        <begin position="159"/>
        <end position="166"/>
    </location>
</feature>
<feature type="helix" evidence="2">
    <location>
        <begin position="169"/>
        <end position="181"/>
    </location>
</feature>
<feature type="helix" evidence="2">
    <location>
        <begin position="190"/>
        <end position="198"/>
    </location>
</feature>
<feature type="strand" evidence="2">
    <location>
        <begin position="199"/>
        <end position="202"/>
    </location>
</feature>
<feature type="helix" evidence="2">
    <location>
        <begin position="203"/>
        <end position="208"/>
    </location>
</feature>
<feature type="strand" evidence="2">
    <location>
        <begin position="212"/>
        <end position="221"/>
    </location>
</feature>
<feature type="strand" evidence="2">
    <location>
        <begin position="223"/>
        <end position="226"/>
    </location>
</feature>
<feature type="helix" evidence="2">
    <location>
        <begin position="227"/>
        <end position="237"/>
    </location>
</feature>
<feature type="strand" evidence="2">
    <location>
        <begin position="246"/>
        <end position="250"/>
    </location>
</feature>
<feature type="helix" evidence="2">
    <location>
        <begin position="251"/>
        <end position="264"/>
    </location>
</feature>
<feature type="helix" evidence="2">
    <location>
        <begin position="265"/>
        <end position="267"/>
    </location>
</feature>
<feature type="strand" evidence="2">
    <location>
        <begin position="268"/>
        <end position="270"/>
    </location>
</feature>
<feature type="strand" evidence="2">
    <location>
        <begin position="272"/>
        <end position="279"/>
    </location>
</feature>
<feature type="helix" evidence="2">
    <location>
        <begin position="282"/>
        <end position="288"/>
    </location>
</feature>
<feature type="strand" evidence="2">
    <location>
        <begin position="292"/>
        <end position="302"/>
    </location>
</feature>
<protein>
    <recommendedName>
        <fullName evidence="1">DNA ligase</fullName>
        <ecNumber evidence="1">6.5.1.2</ecNumber>
    </recommendedName>
    <alternativeName>
        <fullName evidence="1">Polydeoxyribonucleotide synthase [NAD(+)]</fullName>
    </alternativeName>
</protein>
<sequence length="652" mass="72276">MNKRMNELVALLNRYATEYYTSDNPSVSDSEYDRLYRELVELETAYPEQVLADSPTHRVGGKVLDGFEKYSHQYPLYSLQDAFSREELDAFDARVRKEVAHPTYICELKIDGLSISLTYEKGILVAGVTRGDGSIGENITENLKRVKDIPLTLPEELDITVRGECYMPRASFDQVNQARQENGEPEFANPRNAAAGTLRQLDTAVVAKRNLATFLYQEASPSTRDSQEKGLKYLEQLGFVVNPKRILAENIDEIWNFIQEVGQERENLPYDIDGVVIKVNDLASQEELGFTVKAPKWAVAYKFPAEEKEAQLLSVDWTVGRTGVVTPTANLTPVQLAGTTVSRATLHNVDYIAEKDIRKDDTVIVYKAGDIIPAVLRVVESKRVSEEKLDIPTNCPSCNSDLLHFEDEVALRCINPRCPAQIMEGLIHFASRDAMNITGLGPSIVEKLFAANLVKDVADIYRLQEEDFLLLEGVKEKSAAKLYQAIQASKENSAEKLLFGLGIRHVGSKASQLLLQYFHSIENLYQADSEEVASIESLGGVIAKSLQTYFATEGSEILLRELKETGVNLDYKGQTVVADAALSGLTVVLTGKLERLKRSEAKSKLESLGAKVTGSVSKKTDLVVVGADAGSKLQKAQELGIQVRDEAWLESL</sequence>
<comment type="function">
    <text evidence="1">DNA ligase that catalyzes the formation of phosphodiester linkages between 5'-phosphoryl and 3'-hydroxyl groups in double-stranded DNA using NAD as a coenzyme and as the energy source for the reaction. It is essential for DNA replication and repair of damaged DNA.</text>
</comment>
<comment type="catalytic activity">
    <reaction evidence="1">
        <text>NAD(+) + (deoxyribonucleotide)n-3'-hydroxyl + 5'-phospho-(deoxyribonucleotide)m = (deoxyribonucleotide)n+m + AMP + beta-nicotinamide D-nucleotide.</text>
        <dbReference type="EC" id="6.5.1.2"/>
    </reaction>
</comment>
<comment type="cofactor">
    <cofactor evidence="1">
        <name>Mg(2+)</name>
        <dbReference type="ChEBI" id="CHEBI:18420"/>
    </cofactor>
    <cofactor evidence="1">
        <name>Mn(2+)</name>
        <dbReference type="ChEBI" id="CHEBI:29035"/>
    </cofactor>
</comment>
<comment type="similarity">
    <text evidence="1">Belongs to the NAD-dependent DNA ligase family. LigA subfamily.</text>
</comment>
<reference key="1">
    <citation type="journal article" date="2010" name="Genome Biol.">
        <title>Structure and dynamics of the pan-genome of Streptococcus pneumoniae and closely related species.</title>
        <authorList>
            <person name="Donati C."/>
            <person name="Hiller N.L."/>
            <person name="Tettelin H."/>
            <person name="Muzzi A."/>
            <person name="Croucher N.J."/>
            <person name="Angiuoli S.V."/>
            <person name="Oggioni M."/>
            <person name="Dunning Hotopp J.C."/>
            <person name="Hu F.Z."/>
            <person name="Riley D.R."/>
            <person name="Covacci A."/>
            <person name="Mitchell T.J."/>
            <person name="Bentley S.D."/>
            <person name="Kilian M."/>
            <person name="Ehrlich G.D."/>
            <person name="Rappuoli R."/>
            <person name="Moxon E.R."/>
            <person name="Masignani V."/>
        </authorList>
    </citation>
    <scope>NUCLEOTIDE SEQUENCE [LARGE SCALE GENOMIC DNA]</scope>
    <source>
        <strain>P1031</strain>
    </source>
</reference>
<dbReference type="EC" id="6.5.1.2" evidence="1"/>
<dbReference type="EMBL" id="CP000920">
    <property type="protein sequence ID" value="ACO21382.1"/>
    <property type="molecule type" value="Genomic_DNA"/>
</dbReference>
<dbReference type="RefSeq" id="WP_001042590.1">
    <property type="nucleotide sequence ID" value="NC_012467.1"/>
</dbReference>
<dbReference type="PDB" id="4GLW">
    <property type="method" value="X-ray"/>
    <property type="resolution" value="2.00 A"/>
    <property type="chains" value="A/B=1-305"/>
</dbReference>
<dbReference type="PDBsum" id="4GLW"/>
<dbReference type="SMR" id="C1CKI0"/>
<dbReference type="GeneID" id="45653532"/>
<dbReference type="KEGG" id="spp:SPP_1122"/>
<dbReference type="HOGENOM" id="CLU_007764_2_1_9"/>
<dbReference type="EvolutionaryTrace" id="C1CKI0"/>
<dbReference type="GO" id="GO:0005829">
    <property type="term" value="C:cytosol"/>
    <property type="evidence" value="ECO:0007669"/>
    <property type="project" value="TreeGrafter"/>
</dbReference>
<dbReference type="GO" id="GO:0003677">
    <property type="term" value="F:DNA binding"/>
    <property type="evidence" value="ECO:0007669"/>
    <property type="project" value="InterPro"/>
</dbReference>
<dbReference type="GO" id="GO:0003911">
    <property type="term" value="F:DNA ligase (NAD+) activity"/>
    <property type="evidence" value="ECO:0007669"/>
    <property type="project" value="UniProtKB-UniRule"/>
</dbReference>
<dbReference type="GO" id="GO:0046872">
    <property type="term" value="F:metal ion binding"/>
    <property type="evidence" value="ECO:0007669"/>
    <property type="project" value="UniProtKB-KW"/>
</dbReference>
<dbReference type="GO" id="GO:0006281">
    <property type="term" value="P:DNA repair"/>
    <property type="evidence" value="ECO:0007669"/>
    <property type="project" value="UniProtKB-KW"/>
</dbReference>
<dbReference type="GO" id="GO:0006260">
    <property type="term" value="P:DNA replication"/>
    <property type="evidence" value="ECO:0007669"/>
    <property type="project" value="UniProtKB-KW"/>
</dbReference>
<dbReference type="CDD" id="cd17748">
    <property type="entry name" value="BRCT_DNA_ligase_like"/>
    <property type="match status" value="1"/>
</dbReference>
<dbReference type="CDD" id="cd00114">
    <property type="entry name" value="LIGANc"/>
    <property type="match status" value="1"/>
</dbReference>
<dbReference type="FunFam" id="1.10.150.20:FF:000006">
    <property type="entry name" value="DNA ligase"/>
    <property type="match status" value="1"/>
</dbReference>
<dbReference type="FunFam" id="1.10.150.20:FF:000007">
    <property type="entry name" value="DNA ligase"/>
    <property type="match status" value="1"/>
</dbReference>
<dbReference type="FunFam" id="1.10.287.610:FF:000002">
    <property type="entry name" value="DNA ligase"/>
    <property type="match status" value="1"/>
</dbReference>
<dbReference type="FunFam" id="2.40.50.140:FF:000012">
    <property type="entry name" value="DNA ligase"/>
    <property type="match status" value="1"/>
</dbReference>
<dbReference type="FunFam" id="3.30.470.30:FF:000001">
    <property type="entry name" value="DNA ligase"/>
    <property type="match status" value="1"/>
</dbReference>
<dbReference type="FunFam" id="3.40.50.10190:FF:000045">
    <property type="entry name" value="DNA ligase"/>
    <property type="match status" value="1"/>
</dbReference>
<dbReference type="Gene3D" id="6.20.10.30">
    <property type="match status" value="1"/>
</dbReference>
<dbReference type="Gene3D" id="1.10.150.20">
    <property type="entry name" value="5' to 3' exonuclease, C-terminal subdomain"/>
    <property type="match status" value="2"/>
</dbReference>
<dbReference type="Gene3D" id="3.40.50.10190">
    <property type="entry name" value="BRCT domain"/>
    <property type="match status" value="1"/>
</dbReference>
<dbReference type="Gene3D" id="3.30.470.30">
    <property type="entry name" value="DNA ligase/mRNA capping enzyme"/>
    <property type="match status" value="1"/>
</dbReference>
<dbReference type="Gene3D" id="1.10.287.610">
    <property type="entry name" value="Helix hairpin bin"/>
    <property type="match status" value="1"/>
</dbReference>
<dbReference type="Gene3D" id="2.40.50.140">
    <property type="entry name" value="Nucleic acid-binding proteins"/>
    <property type="match status" value="1"/>
</dbReference>
<dbReference type="HAMAP" id="MF_01588">
    <property type="entry name" value="DNA_ligase_A"/>
    <property type="match status" value="1"/>
</dbReference>
<dbReference type="InterPro" id="IPR001357">
    <property type="entry name" value="BRCT_dom"/>
</dbReference>
<dbReference type="InterPro" id="IPR036420">
    <property type="entry name" value="BRCT_dom_sf"/>
</dbReference>
<dbReference type="InterPro" id="IPR041663">
    <property type="entry name" value="DisA/LigA_HHH"/>
</dbReference>
<dbReference type="InterPro" id="IPR001679">
    <property type="entry name" value="DNA_ligase"/>
</dbReference>
<dbReference type="InterPro" id="IPR018239">
    <property type="entry name" value="DNA_ligase_AS"/>
</dbReference>
<dbReference type="InterPro" id="IPR033136">
    <property type="entry name" value="DNA_ligase_CS"/>
</dbReference>
<dbReference type="InterPro" id="IPR013839">
    <property type="entry name" value="DNAligase_adenylation"/>
</dbReference>
<dbReference type="InterPro" id="IPR013840">
    <property type="entry name" value="DNAligase_N"/>
</dbReference>
<dbReference type="InterPro" id="IPR003583">
    <property type="entry name" value="Hlx-hairpin-Hlx_DNA-bd_motif"/>
</dbReference>
<dbReference type="InterPro" id="IPR012340">
    <property type="entry name" value="NA-bd_OB-fold"/>
</dbReference>
<dbReference type="InterPro" id="IPR004150">
    <property type="entry name" value="NAD_DNA_ligase_OB"/>
</dbReference>
<dbReference type="InterPro" id="IPR010994">
    <property type="entry name" value="RuvA_2-like"/>
</dbReference>
<dbReference type="InterPro" id="IPR004149">
    <property type="entry name" value="Znf_DNAligase_C4"/>
</dbReference>
<dbReference type="NCBIfam" id="TIGR00575">
    <property type="entry name" value="dnlj"/>
    <property type="match status" value="1"/>
</dbReference>
<dbReference type="NCBIfam" id="NF005932">
    <property type="entry name" value="PRK07956.1"/>
    <property type="match status" value="1"/>
</dbReference>
<dbReference type="PANTHER" id="PTHR23389">
    <property type="entry name" value="CHROMOSOME TRANSMISSION FIDELITY FACTOR 18"/>
    <property type="match status" value="1"/>
</dbReference>
<dbReference type="PANTHER" id="PTHR23389:SF9">
    <property type="entry name" value="DNA LIGASE"/>
    <property type="match status" value="1"/>
</dbReference>
<dbReference type="Pfam" id="PF00533">
    <property type="entry name" value="BRCT"/>
    <property type="match status" value="1"/>
</dbReference>
<dbReference type="Pfam" id="PF01653">
    <property type="entry name" value="DNA_ligase_aden"/>
    <property type="match status" value="1"/>
</dbReference>
<dbReference type="Pfam" id="PF03120">
    <property type="entry name" value="DNA_ligase_OB"/>
    <property type="match status" value="1"/>
</dbReference>
<dbReference type="Pfam" id="PF03119">
    <property type="entry name" value="DNA_ligase_ZBD"/>
    <property type="match status" value="1"/>
</dbReference>
<dbReference type="Pfam" id="PF12826">
    <property type="entry name" value="HHH_2"/>
    <property type="match status" value="1"/>
</dbReference>
<dbReference type="Pfam" id="PF14520">
    <property type="entry name" value="HHH_5"/>
    <property type="match status" value="1"/>
</dbReference>
<dbReference type="PIRSF" id="PIRSF001604">
    <property type="entry name" value="LigA"/>
    <property type="match status" value="1"/>
</dbReference>
<dbReference type="SMART" id="SM00292">
    <property type="entry name" value="BRCT"/>
    <property type="match status" value="1"/>
</dbReference>
<dbReference type="SMART" id="SM00278">
    <property type="entry name" value="HhH1"/>
    <property type="match status" value="2"/>
</dbReference>
<dbReference type="SMART" id="SM00532">
    <property type="entry name" value="LIGANc"/>
    <property type="match status" value="1"/>
</dbReference>
<dbReference type="SUPFAM" id="SSF52113">
    <property type="entry name" value="BRCT domain"/>
    <property type="match status" value="1"/>
</dbReference>
<dbReference type="SUPFAM" id="SSF56091">
    <property type="entry name" value="DNA ligase/mRNA capping enzyme, catalytic domain"/>
    <property type="match status" value="1"/>
</dbReference>
<dbReference type="SUPFAM" id="SSF50249">
    <property type="entry name" value="Nucleic acid-binding proteins"/>
    <property type="match status" value="1"/>
</dbReference>
<dbReference type="SUPFAM" id="SSF47781">
    <property type="entry name" value="RuvA domain 2-like"/>
    <property type="match status" value="1"/>
</dbReference>
<dbReference type="PROSITE" id="PS50172">
    <property type="entry name" value="BRCT"/>
    <property type="match status" value="1"/>
</dbReference>
<dbReference type="PROSITE" id="PS01055">
    <property type="entry name" value="DNA_LIGASE_N1"/>
    <property type="match status" value="1"/>
</dbReference>
<dbReference type="PROSITE" id="PS01056">
    <property type="entry name" value="DNA_LIGASE_N2"/>
    <property type="match status" value="1"/>
</dbReference>
<organism>
    <name type="scientific">Streptococcus pneumoniae (strain P1031)</name>
    <dbReference type="NCBI Taxonomy" id="488223"/>
    <lineage>
        <taxon>Bacteria</taxon>
        <taxon>Bacillati</taxon>
        <taxon>Bacillota</taxon>
        <taxon>Bacilli</taxon>
        <taxon>Lactobacillales</taxon>
        <taxon>Streptococcaceae</taxon>
        <taxon>Streptococcus</taxon>
    </lineage>
</organism>
<name>DNLJ_STRZP</name>
<accession>C1CKI0</accession>